<name>FER_RHORT</name>
<gene>
    <name evidence="7" type="primary">fer</name>
    <name type="ordered locus">Rru_A0973</name>
</gene>
<organism>
    <name type="scientific">Rhodospirillum rubrum (strain ATCC 11170 / ATH 1.1.1 / DSM 467 / LMG 4362 / NCIMB 8255 / S1)</name>
    <dbReference type="NCBI Taxonomy" id="269796"/>
    <lineage>
        <taxon>Bacteria</taxon>
        <taxon>Pseudomonadati</taxon>
        <taxon>Pseudomonadota</taxon>
        <taxon>Alphaproteobacteria</taxon>
        <taxon>Rhodospirillales</taxon>
        <taxon>Rhodospirillaceae</taxon>
        <taxon>Rhodospirillum</taxon>
    </lineage>
</organism>
<protein>
    <recommendedName>
        <fullName evidence="6">Encapsulated ferritin-like protein</fullName>
        <shortName evidence="6">EncFtn</shortName>
        <ecNumber evidence="2 4">1.16.3.1</ecNumber>
    </recommendedName>
</protein>
<sequence>MAQSSNSTHEPLEVLKEETVNRHRAIVSVMEELEAVDWYDQRVDASTDPELTAILAHNRDEEKEHAAMTLEWLRRNDAKWAEHLRTYLFTEGPITAIEAADTAGEGSGGDAAKGATAQGDGSLGIGSLKGEAALARPPRL</sequence>
<keyword id="KW-0002">3D-structure</keyword>
<keyword id="KW-0106">Calcium</keyword>
<keyword id="KW-1284">Encapsulin nanocompartment</keyword>
<keyword id="KW-0406">Ion transport</keyword>
<keyword id="KW-0408">Iron</keyword>
<keyword id="KW-0409">Iron storage</keyword>
<keyword id="KW-0410">Iron transport</keyword>
<keyword id="KW-0479">Metal-binding</keyword>
<keyword id="KW-0560">Oxidoreductase</keyword>
<keyword id="KW-1185">Reference proteome</keyword>
<keyword id="KW-0813">Transport</keyword>
<proteinExistence type="evidence at protein level"/>
<reference key="1">
    <citation type="journal article" date="2011" name="Stand. Genomic Sci.">
        <title>Complete genome sequence of Rhodospirillum rubrum type strain (S1).</title>
        <authorList>
            <person name="Munk A.C."/>
            <person name="Copeland A."/>
            <person name="Lucas S."/>
            <person name="Lapidus A."/>
            <person name="Del Rio T.G."/>
            <person name="Barry K."/>
            <person name="Detter J.C."/>
            <person name="Hammon N."/>
            <person name="Israni S."/>
            <person name="Pitluck S."/>
            <person name="Brettin T."/>
            <person name="Bruce D."/>
            <person name="Han C."/>
            <person name="Tapia R."/>
            <person name="Gilna P."/>
            <person name="Schmutz J."/>
            <person name="Larimer F."/>
            <person name="Land M."/>
            <person name="Kyrpides N.C."/>
            <person name="Mavromatis K."/>
            <person name="Richardson P."/>
            <person name="Rohde M."/>
            <person name="Goeker M."/>
            <person name="Klenk H.P."/>
            <person name="Zhang Y."/>
            <person name="Roberts G.P."/>
            <person name="Reslewic S."/>
            <person name="Schwartz D.C."/>
        </authorList>
    </citation>
    <scope>NUCLEOTIDE SEQUENCE [LARGE SCALE GENOMIC DNA]</scope>
    <source>
        <strain>ATCC 11170 / ATH 1.1.1 / DSM 467 / LMG 4362 / NCIMB 8255 / S1</strain>
    </source>
</reference>
<reference evidence="10 11 12 14" key="2">
    <citation type="journal article" date="2016" name="Elife">
        <title>Structural characterization of encapsulated ferritin provides insight into iron storage in bacterial nanocompartments.</title>
        <authorList>
            <person name="He D."/>
            <person name="Hughes S."/>
            <person name="Vanden-Hehir S."/>
            <person name="Georgiev A."/>
            <person name="Altenbach K."/>
            <person name="Tarrant E."/>
            <person name="Mackay C.L."/>
            <person name="Waldron K.J."/>
            <person name="Clarke D.J."/>
            <person name="Marles-Wright J."/>
        </authorList>
    </citation>
    <scope>X-RAY CRYSTALLOGRAPHY (2.06 ANGSTROMS) OF 1-96 IN COMPLEX WITH CALCIUM AND IRON</scope>
    <scope>FUNCTION</scope>
    <scope>CATALYTIC ACTIVITY</scope>
    <scope>COFACTOR</scope>
    <scope>SUBUNIT</scope>
    <scope>SUBCELLULAR LOCATION</scope>
    <scope>MUTAGENESIS OF GLU-32; GLU-62 AND HIS-65</scope>
    <source>
        <strain>ATCC 11170 / ATH 1.1.1 / DSM 467 / LMG 4362 / NCIMB 8255 / S1</strain>
    </source>
</reference>
<reference evidence="13" key="3">
    <citation type="submission" date="2016-06" db="PDB data bank">
        <title>Crystal structure of Rhodospirillum rubrum Rru_A0973 mutant E32A, E62A, H65A.</title>
        <authorList>
            <person name="He D."/>
            <person name="Hughes S."/>
            <person name="Vanden-Hehir S."/>
            <person name="Georgiev A."/>
            <person name="Altenbach K."/>
            <person name="Tarrant E."/>
            <person name="Mackay C.L."/>
            <person name="Waldron K.J."/>
            <person name="Clarke D.J."/>
            <person name="Marles-Wright J."/>
        </authorList>
    </citation>
    <scope>X-RAY CRYSTALLOGRAPHY (2.25 ANGSTROMS) OF 1-96</scope>
    <scope>SUBUNIT</scope>
</reference>
<reference key="4">
    <citation type="journal article" date="2019" name="Biochem. J.">
        <title>Conservation of the structural and functional architecture of encapsulated ferritins in bacteria and archaea.</title>
        <authorList>
            <person name="He D."/>
            <person name="Piergentili C."/>
            <person name="Ross J."/>
            <person name="Tarrant E."/>
            <person name="Tuck L.R."/>
            <person name="Mackay C.L."/>
            <person name="McIver Z."/>
            <person name="Waldron K.J."/>
            <person name="Clarke D.J."/>
            <person name="Marles-Wright J."/>
        </authorList>
    </citation>
    <scope>FUNCTION</scope>
    <scope>CATALYTIC ACTIVITY</scope>
    <scope>SUBUNIT</scope>
    <source>
        <strain>ATCC 11170 / ATH 1.1.1 / DSM 467 / LMG 4362 / NCIMB 8255 / S1</strain>
    </source>
</reference>
<reference evidence="15 16" key="5">
    <citation type="journal article" date="2020" name="J. Biol. Chem.">
        <title>Dissecting the structural and functional roles of a putative metal entry site in encapsulated ferritins.</title>
        <authorList>
            <person name="Piergentili C."/>
            <person name="Ross J."/>
            <person name="He D."/>
            <person name="Gallagher K.J."/>
            <person name="Stanley W.A."/>
            <person name="Adam L."/>
            <person name="Mackay C.L."/>
            <person name="Basle A."/>
            <person name="Waldron K.J."/>
            <person name="Clarke D.J."/>
            <person name="Marles-Wright J."/>
        </authorList>
    </citation>
    <scope>X-RAY CRYSTALLOGRAPHY (2.19 ANGSTROMS) OF 1-96</scope>
    <scope>FUNCTION</scope>
    <scope>CATALYTIC ACTIVITY</scope>
    <scope>COFACTOR</scope>
    <scope>ACTIVITY REGULATION</scope>
    <scope>SUBUNIT</scope>
    <scope>MUTAGENESIS OF 31-GLU--GLU-34; GLU-31; GLU-34 AND TRP-38</scope>
    <source>
        <strain>ATCC 11170 / ATH 1.1.1 / DSM 467 / LMG 4362 / NCIMB 8255 / S1</strain>
    </source>
</reference>
<dbReference type="EC" id="1.16.3.1" evidence="2 4"/>
<dbReference type="EMBL" id="CP000230">
    <property type="protein sequence ID" value="ABC21774.1"/>
    <property type="molecule type" value="Genomic_DNA"/>
</dbReference>
<dbReference type="RefSeq" id="WP_011388728.1">
    <property type="nucleotide sequence ID" value="NC_007643.1"/>
</dbReference>
<dbReference type="RefSeq" id="YP_426061.1">
    <property type="nucleotide sequence ID" value="NC_007643.1"/>
</dbReference>
<dbReference type="PDB" id="5DA5">
    <property type="method" value="X-ray"/>
    <property type="resolution" value="2.06 A"/>
    <property type="chains" value="A/B/C/D/E/F/G/H/I/J/K/L/M/N/O/P/Q/R/S/T/U/V/W/X/Y/Z/a/b/c/d=1-96"/>
</dbReference>
<dbReference type="PDB" id="5L89">
    <property type="method" value="X-ray"/>
    <property type="resolution" value="2.59 A"/>
    <property type="chains" value="A/B/C/D/E/F/G/H/I/J/K/L/M/N/O/P/Q/R/S/T/U/V/W/X/Y/Z/a/b/c/d=1-96"/>
</dbReference>
<dbReference type="PDB" id="5L8B">
    <property type="method" value="X-ray"/>
    <property type="resolution" value="2.21 A"/>
    <property type="chains" value="A/B/C/D/E/F/G/H/I/J/K/L/M/N/O/P/Q/R/S/T/U/V/W/X/Y/Z/a/b/c/d=1-96"/>
</dbReference>
<dbReference type="PDB" id="5L8F">
    <property type="method" value="X-ray"/>
    <property type="resolution" value="2.25 A"/>
    <property type="chains" value="A/B/C/D/E/F/G/H/I/J=1-96"/>
</dbReference>
<dbReference type="PDB" id="5L8G">
    <property type="method" value="X-ray"/>
    <property type="resolution" value="2.97 A"/>
    <property type="chains" value="A/B/C/D/E/F/G/H/I/J/K/L/M/N/O/P/Q/R/S/T/U/V/W/X/Y/Z/a/b/c/d=1-96"/>
</dbReference>
<dbReference type="PDB" id="6SUW">
    <property type="method" value="X-ray"/>
    <property type="resolution" value="2.66 A"/>
    <property type="chains" value="A/B/C/D/E/F/G/H/I/J/K/L/M/N/O/P/Q/R/S/T/U/V/W/X/Y/Z/a/b/c/d=1-96"/>
</dbReference>
<dbReference type="PDB" id="6SV1">
    <property type="method" value="X-ray"/>
    <property type="resolution" value="2.19 A"/>
    <property type="chains" value="A/B/C/D/E/F/G/H/I/J/K/L/M/N/O/P/Q/R/S/T/U/V/W/X/Y/Z/a/b/c/d=1-96"/>
</dbReference>
<dbReference type="PDBsum" id="5DA5"/>
<dbReference type="PDBsum" id="5L89"/>
<dbReference type="PDBsum" id="5L8B"/>
<dbReference type="PDBsum" id="5L8F"/>
<dbReference type="PDBsum" id="5L8G"/>
<dbReference type="PDBsum" id="6SUW"/>
<dbReference type="PDBsum" id="6SV1"/>
<dbReference type="SMR" id="Q2RVS1"/>
<dbReference type="STRING" id="269796.Rru_A0973"/>
<dbReference type="EnsemblBacteria" id="ABC21774">
    <property type="protein sequence ID" value="ABC21774"/>
    <property type="gene ID" value="Rru_A0973"/>
</dbReference>
<dbReference type="KEGG" id="rru:Rru_A0973"/>
<dbReference type="PATRIC" id="fig|269796.9.peg.1028"/>
<dbReference type="eggNOG" id="COG3461">
    <property type="taxonomic scope" value="Bacteria"/>
</dbReference>
<dbReference type="HOGENOM" id="CLU_161402_0_0_5"/>
<dbReference type="PhylomeDB" id="Q2RVS1"/>
<dbReference type="Proteomes" id="UP000001929">
    <property type="component" value="Chromosome"/>
</dbReference>
<dbReference type="GO" id="GO:0140737">
    <property type="term" value="C:encapsulin nanocompartment"/>
    <property type="evidence" value="ECO:0000314"/>
    <property type="project" value="UniProtKB"/>
</dbReference>
<dbReference type="GO" id="GO:0004322">
    <property type="term" value="F:ferroxidase activity"/>
    <property type="evidence" value="ECO:0000314"/>
    <property type="project" value="UniProtKB"/>
</dbReference>
<dbReference type="GO" id="GO:0046872">
    <property type="term" value="F:metal ion binding"/>
    <property type="evidence" value="ECO:0007669"/>
    <property type="project" value="UniProtKB-KW"/>
</dbReference>
<dbReference type="GO" id="GO:0006879">
    <property type="term" value="P:intracellular iron ion homeostasis"/>
    <property type="evidence" value="ECO:0007669"/>
    <property type="project" value="UniProtKB-KW"/>
</dbReference>
<dbReference type="GO" id="GO:0006826">
    <property type="term" value="P:iron ion transport"/>
    <property type="evidence" value="ECO:0007669"/>
    <property type="project" value="UniProtKB-KW"/>
</dbReference>
<dbReference type="Gene3D" id="6.10.140.1960">
    <property type="match status" value="1"/>
</dbReference>
<dbReference type="InterPro" id="IPR054581">
    <property type="entry name" value="EncFtn-like"/>
</dbReference>
<dbReference type="InterPro" id="IPR030907">
    <property type="entry name" value="Ferrit_encaps"/>
</dbReference>
<dbReference type="InterPro" id="IPR009078">
    <property type="entry name" value="Ferritin-like_SF"/>
</dbReference>
<dbReference type="NCBIfam" id="TIGR04535">
    <property type="entry name" value="ferrit_encaps"/>
    <property type="match status" value="1"/>
</dbReference>
<dbReference type="Pfam" id="PF22277">
    <property type="entry name" value="EncFtn-like"/>
    <property type="match status" value="1"/>
</dbReference>
<dbReference type="SUPFAM" id="SSF47240">
    <property type="entry name" value="Ferritin-like"/>
    <property type="match status" value="1"/>
</dbReference>
<feature type="chain" id="PRO_0000455323" description="Encapsulated ferritin-like protein">
    <location>
        <begin position="1"/>
        <end position="140"/>
    </location>
</feature>
<feature type="region of interest" description="Disordered" evidence="1">
    <location>
        <begin position="100"/>
        <end position="140"/>
    </location>
</feature>
<feature type="region of interest" description="Targeting peptide" evidence="8">
    <location>
        <begin position="100"/>
        <end position="140"/>
    </location>
</feature>
<feature type="binding site" evidence="2 4 10">
    <location>
        <position position="31"/>
    </location>
    <ligand>
        <name>Ca(2+)</name>
        <dbReference type="ChEBI" id="CHEBI:29108"/>
    </ligand>
</feature>
<feature type="binding site" evidence="2 4 10">
    <location>
        <position position="32"/>
    </location>
    <ligand>
        <name>Fe cation</name>
        <dbReference type="ChEBI" id="CHEBI:24875"/>
        <label>1</label>
    </ligand>
</feature>
<feature type="binding site" evidence="2 4 10">
    <location>
        <position position="32"/>
    </location>
    <ligand>
        <name>Fe cation</name>
        <dbReference type="ChEBI" id="CHEBI:24875"/>
        <label>2</label>
    </ligand>
</feature>
<feature type="binding site" evidence="2 4 10">
    <location>
        <position position="34"/>
    </location>
    <ligand>
        <name>Ca(2+)</name>
        <dbReference type="ChEBI" id="CHEBI:29108"/>
    </ligand>
</feature>
<feature type="binding site" evidence="2 4 10">
    <location>
        <position position="62"/>
    </location>
    <ligand>
        <name>Fe cation</name>
        <dbReference type="ChEBI" id="CHEBI:24875"/>
        <label>1</label>
    </ligand>
</feature>
<feature type="binding site" evidence="2 4 10">
    <location>
        <position position="62"/>
    </location>
    <ligand>
        <name>Fe cation</name>
        <dbReference type="ChEBI" id="CHEBI:24875"/>
        <label>2</label>
    </ligand>
</feature>
<feature type="binding site" evidence="2 4 10">
    <location>
        <position position="65"/>
    </location>
    <ligand>
        <name>Fe cation</name>
        <dbReference type="ChEBI" id="CHEBI:24875"/>
        <label>1</label>
    </ligand>
</feature>
<feature type="binding site" evidence="2 4 10">
    <location>
        <position position="65"/>
    </location>
    <ligand>
        <name>Fe cation</name>
        <dbReference type="ChEBI" id="CHEBI:24875"/>
        <label>2</label>
    </ligand>
</feature>
<feature type="mutagenesis site" description="Wild-type oligomerization. Increased ferroxidase activity." evidence="4">
    <original>EELE</original>
    <variation>AELA</variation>
    <location>
        <begin position="31"/>
        <end position="34"/>
    </location>
</feature>
<feature type="mutagenesis site" description="Altered oligomeric state in solution (decamers, tetramers and dimers), partial liganding of metal at this site. Increased ferroxidase activity, alone and encapsulated." evidence="4">
    <original>E</original>
    <variation>A</variation>
    <location>
        <position position="31"/>
    </location>
</feature>
<feature type="mutagenesis site" description="Forms decamers in the absence of Fe(2+), no bound metal ions, 40% ferroxidase activity." evidence="2 11">
    <original>E</original>
    <variation>A</variation>
    <location>
        <position position="32"/>
    </location>
</feature>
<feature type="mutagenesis site" description="Altered oligomeric state in solution (decamers and dimers), no metal ligand at this site. Increased ferroxidase activity, alone and encapsulated." evidence="4">
    <original>E</original>
    <variation>A</variation>
    <location>
        <position position="34"/>
    </location>
</feature>
<feature type="mutagenesis site" description="Less stable oligomerization, cannot obtain crystals. Increased ferroxidase activity, alone and encapsulated." evidence="4">
    <original>W</original>
    <variation>A</variation>
    <variation>G</variation>
    <location>
        <position position="38"/>
    </location>
</feature>
<feature type="mutagenesis site" description="Forms decamers in the absence of Fe(2+), binds 1 Ca(2+) via E-34, loss of ferroxidase activity." evidence="2 12">
    <original>E</original>
    <variation>A</variation>
    <location>
        <position position="62"/>
    </location>
</feature>
<feature type="mutagenesis site" description="No longer forms decamers in solution, a minor dimeric form is observed, binds 3 Ca(2+), 55% ferroxidase activity." evidence="2 14">
    <original>H</original>
    <variation>A</variation>
    <location>
        <position position="65"/>
    </location>
</feature>
<feature type="helix" evidence="17">
    <location>
        <begin position="12"/>
        <end position="14"/>
    </location>
</feature>
<feature type="helix" evidence="17">
    <location>
        <begin position="17"/>
        <end position="45"/>
    </location>
</feature>
<feature type="helix" evidence="17">
    <location>
        <begin position="49"/>
        <end position="75"/>
    </location>
</feature>
<feature type="helix" evidence="17">
    <location>
        <begin position="78"/>
        <end position="87"/>
    </location>
</feature>
<feature type="helix" evidence="17">
    <location>
        <begin position="94"/>
        <end position="96"/>
    </location>
</feature>
<evidence type="ECO:0000256" key="1">
    <source>
        <dbReference type="SAM" id="MobiDB-lite"/>
    </source>
</evidence>
<evidence type="ECO:0000269" key="2">
    <source>
    </source>
</evidence>
<evidence type="ECO:0000269" key="3">
    <source>
    </source>
</evidence>
<evidence type="ECO:0000269" key="4">
    <source>
    </source>
</evidence>
<evidence type="ECO:0000269" key="5">
    <source ref="3"/>
</evidence>
<evidence type="ECO:0000303" key="6">
    <source>
    </source>
</evidence>
<evidence type="ECO:0000305" key="7"/>
<evidence type="ECO:0000305" key="8">
    <source>
    </source>
</evidence>
<evidence type="ECO:0000305" key="9">
    <source>
    </source>
</evidence>
<evidence type="ECO:0007744" key="10">
    <source>
        <dbReference type="PDB" id="5DA5"/>
    </source>
</evidence>
<evidence type="ECO:0007744" key="11">
    <source>
        <dbReference type="PDB" id="5L89"/>
    </source>
</evidence>
<evidence type="ECO:0007744" key="12">
    <source>
        <dbReference type="PDB" id="5L8B"/>
    </source>
</evidence>
<evidence type="ECO:0007744" key="13">
    <source>
        <dbReference type="PDB" id="5L8F"/>
    </source>
</evidence>
<evidence type="ECO:0007744" key="14">
    <source>
        <dbReference type="PDB" id="5L8G"/>
    </source>
</evidence>
<evidence type="ECO:0007744" key="15">
    <source>
        <dbReference type="PDB" id="6SUW"/>
    </source>
</evidence>
<evidence type="ECO:0007744" key="16">
    <source>
        <dbReference type="PDB" id="6SV1"/>
    </source>
</evidence>
<evidence type="ECO:0007829" key="17">
    <source>
        <dbReference type="PDB" id="5DA5"/>
    </source>
</evidence>
<accession>Q2RVS1</accession>
<comment type="function">
    <text evidence="2 4 9">Cargo protein of a type 1 encapsulin nanocompartment. A ferritin-like ferroxidase that mineralizes iron inside the encapsulin nanocompartment. Converts Fe(2+) to Fe(3+) that is released to the exterior of the decameric complex for deposition in the encapsulin nanocompartment. In solution the decamer binds 10-15 iron cations; in the encapsulin nanocompartment the decamer can bind up to 48 ions, perhaps via its internal channel and on its exterior. The empty encapsulin nanocompartment sequesters about 2200 Fe ions while the cargo-loaded nanocompartment can maximally sequester about 4150 Fe ions. EncFtn retains ferroxidase activity when encapsulated (PubMed:27529188). Flux in the active site di-iron metal center is thought to be controlled by the 'entry site' of the protein, which both attracts metal and controls the rate of iron oxidation (Probable). Encapsulation in the nanocompartment does not alter either function of this protein (PubMed:32878987).</text>
</comment>
<comment type="catalytic activity">
    <reaction evidence="2 3 4">
        <text>4 Fe(2+) + O2 + 4 H(+) = 4 Fe(3+) + 2 H2O</text>
        <dbReference type="Rhea" id="RHEA:11148"/>
        <dbReference type="ChEBI" id="CHEBI:15377"/>
        <dbReference type="ChEBI" id="CHEBI:15378"/>
        <dbReference type="ChEBI" id="CHEBI:15379"/>
        <dbReference type="ChEBI" id="CHEBI:29033"/>
        <dbReference type="ChEBI" id="CHEBI:29034"/>
        <dbReference type="EC" id="1.16.3.1"/>
    </reaction>
    <physiologicalReaction direction="left-to-right" evidence="2 3 4">
        <dbReference type="Rhea" id="RHEA:11149"/>
    </physiologicalReaction>
</comment>
<comment type="cofactor">
    <cofactor evidence="2 4">
        <name>Fe(2+)</name>
        <dbReference type="ChEBI" id="CHEBI:29033"/>
    </cofactor>
    <text evidence="2 4">Binds a di-iron center symmetrically between each dimer. Fe(2+), Zn(2+) and Co(2+) but not Fe(3+), Ca(2+), Mg(2+) or Mn(2+) induce protein oligomerization.</text>
</comment>
<comment type="cofactor">
    <cofactor evidence="2 4">
        <name>Ca(2+)</name>
        <dbReference type="ChEBI" id="CHEBI:29108"/>
    </cofactor>
    <text evidence="2 4">Binds 1 Ca cation symmetrically between each dimer in what is called the entry site; in vivo this may be an Fe cation.</text>
</comment>
<comment type="activity regulation">
    <text evidence="3 4">Ferroxidase activity inhibited by Zn(2+) (PubMed:30837306, PubMed:32878987). Mutants at Glu-31, Glu-34 and Trp-38 are also inhibited by Zn(2+) (PubMed:32878987).</text>
</comment>
<comment type="subunit">
    <text evidence="2 3 4 5 8">Monomers form antiparallel dimers which assemble in a decameric ring 7 nm in diameter and 4.5 nm thick with a central channel (construct without targeting peptide) (PubMed:27529188, PubMed:30837306, PubMed:32878987, Ref.3). Growth in Fe(2+)-rich medium induces oligomerization, the monomer does not bind metals (PubMed:27529188, PubMed:32878987). The target peptide probably extends away from the ring, to allow binding to the interior of the encapsulin nanocompartment shell (Probable).</text>
</comment>
<comment type="subcellular location">
    <subcellularLocation>
        <location evidence="2">Encapsulin nanocompartment</location>
    </subcellularLocation>
</comment>
<comment type="domain">
    <text evidence="2 3">The decamer has negatively charged patches on its exterior, and a negatively charged tunnel at the center, that are probably metal-binding sites.</text>
</comment>
<comment type="similarity">
    <text evidence="8">Belongs to the ferritin-like superfamily. EncFtn family.</text>
</comment>